<dbReference type="EC" id="3.1.-.-" evidence="1"/>
<dbReference type="EMBL" id="CP000507">
    <property type="protein sequence ID" value="ABM00625.1"/>
    <property type="molecule type" value="Genomic_DNA"/>
</dbReference>
<dbReference type="RefSeq" id="WP_011760531.1">
    <property type="nucleotide sequence ID" value="NC_008700.1"/>
</dbReference>
<dbReference type="SMR" id="A1S8B8"/>
<dbReference type="STRING" id="326297.Sama_2420"/>
<dbReference type="KEGG" id="saz:Sama_2420"/>
<dbReference type="eggNOG" id="COG0258">
    <property type="taxonomic scope" value="Bacteria"/>
</dbReference>
<dbReference type="HOGENOM" id="CLU_004675_1_2_6"/>
<dbReference type="OrthoDB" id="8070997at2"/>
<dbReference type="Proteomes" id="UP000009175">
    <property type="component" value="Chromosome"/>
</dbReference>
<dbReference type="GO" id="GO:0008409">
    <property type="term" value="F:5'-3' exonuclease activity"/>
    <property type="evidence" value="ECO:0007669"/>
    <property type="project" value="InterPro"/>
</dbReference>
<dbReference type="GO" id="GO:0017108">
    <property type="term" value="F:5'-flap endonuclease activity"/>
    <property type="evidence" value="ECO:0007669"/>
    <property type="project" value="UniProtKB-UniRule"/>
</dbReference>
<dbReference type="GO" id="GO:0003677">
    <property type="term" value="F:DNA binding"/>
    <property type="evidence" value="ECO:0007669"/>
    <property type="project" value="UniProtKB-UniRule"/>
</dbReference>
<dbReference type="GO" id="GO:0000287">
    <property type="term" value="F:magnesium ion binding"/>
    <property type="evidence" value="ECO:0007669"/>
    <property type="project" value="UniProtKB-UniRule"/>
</dbReference>
<dbReference type="GO" id="GO:0030955">
    <property type="term" value="F:potassium ion binding"/>
    <property type="evidence" value="ECO:0007669"/>
    <property type="project" value="UniProtKB-UniRule"/>
</dbReference>
<dbReference type="GO" id="GO:0033567">
    <property type="term" value="P:DNA replication, Okazaki fragment processing"/>
    <property type="evidence" value="ECO:0007669"/>
    <property type="project" value="UniProtKB-UniRule"/>
</dbReference>
<dbReference type="CDD" id="cd09898">
    <property type="entry name" value="H3TH_53EXO"/>
    <property type="match status" value="1"/>
</dbReference>
<dbReference type="CDD" id="cd09859">
    <property type="entry name" value="PIN_53EXO"/>
    <property type="match status" value="1"/>
</dbReference>
<dbReference type="FunFam" id="1.10.150.20:FF:000003">
    <property type="entry name" value="DNA polymerase I"/>
    <property type="match status" value="1"/>
</dbReference>
<dbReference type="Gene3D" id="1.10.150.20">
    <property type="entry name" value="5' to 3' exonuclease, C-terminal subdomain"/>
    <property type="match status" value="1"/>
</dbReference>
<dbReference type="Gene3D" id="3.40.50.1010">
    <property type="entry name" value="5'-nuclease"/>
    <property type="match status" value="1"/>
</dbReference>
<dbReference type="HAMAP" id="MF_01192">
    <property type="entry name" value="Xni"/>
    <property type="match status" value="1"/>
</dbReference>
<dbReference type="InterPro" id="IPR020046">
    <property type="entry name" value="5-3_exonucl_a-hlix_arch_N"/>
</dbReference>
<dbReference type="InterPro" id="IPR002421">
    <property type="entry name" value="5-3_exonuclease"/>
</dbReference>
<dbReference type="InterPro" id="IPR036279">
    <property type="entry name" value="5-3_exonuclease_C_sf"/>
</dbReference>
<dbReference type="InterPro" id="IPR020045">
    <property type="entry name" value="DNA_polI_H3TH"/>
</dbReference>
<dbReference type="InterPro" id="IPR038969">
    <property type="entry name" value="FEN"/>
</dbReference>
<dbReference type="InterPro" id="IPR008918">
    <property type="entry name" value="HhH2"/>
</dbReference>
<dbReference type="InterPro" id="IPR029060">
    <property type="entry name" value="PIN-like_dom_sf"/>
</dbReference>
<dbReference type="InterPro" id="IPR022895">
    <property type="entry name" value="Xni"/>
</dbReference>
<dbReference type="NCBIfam" id="NF007017">
    <property type="entry name" value="PRK09482.1"/>
    <property type="match status" value="1"/>
</dbReference>
<dbReference type="PANTHER" id="PTHR42646:SF2">
    <property type="entry name" value="5'-3' EXONUCLEASE FAMILY PROTEIN"/>
    <property type="match status" value="1"/>
</dbReference>
<dbReference type="PANTHER" id="PTHR42646">
    <property type="entry name" value="FLAP ENDONUCLEASE XNI"/>
    <property type="match status" value="1"/>
</dbReference>
<dbReference type="Pfam" id="PF01367">
    <property type="entry name" value="5_3_exonuc"/>
    <property type="match status" value="1"/>
</dbReference>
<dbReference type="Pfam" id="PF02739">
    <property type="entry name" value="5_3_exonuc_N"/>
    <property type="match status" value="1"/>
</dbReference>
<dbReference type="SMART" id="SM00475">
    <property type="entry name" value="53EXOc"/>
    <property type="match status" value="1"/>
</dbReference>
<dbReference type="SMART" id="SM00279">
    <property type="entry name" value="HhH2"/>
    <property type="match status" value="1"/>
</dbReference>
<dbReference type="SUPFAM" id="SSF47807">
    <property type="entry name" value="5' to 3' exonuclease, C-terminal subdomain"/>
    <property type="match status" value="1"/>
</dbReference>
<dbReference type="SUPFAM" id="SSF88723">
    <property type="entry name" value="PIN domain-like"/>
    <property type="match status" value="1"/>
</dbReference>
<reference key="1">
    <citation type="submission" date="2006-12" db="EMBL/GenBank/DDBJ databases">
        <title>Complete sequence of Shewanella amazonensis SB2B.</title>
        <authorList>
            <consortium name="US DOE Joint Genome Institute"/>
            <person name="Copeland A."/>
            <person name="Lucas S."/>
            <person name="Lapidus A."/>
            <person name="Barry K."/>
            <person name="Detter J.C."/>
            <person name="Glavina del Rio T."/>
            <person name="Hammon N."/>
            <person name="Israni S."/>
            <person name="Dalin E."/>
            <person name="Tice H."/>
            <person name="Pitluck S."/>
            <person name="Munk A.C."/>
            <person name="Brettin T."/>
            <person name="Bruce D."/>
            <person name="Han C."/>
            <person name="Tapia R."/>
            <person name="Gilna P."/>
            <person name="Schmutz J."/>
            <person name="Larimer F."/>
            <person name="Land M."/>
            <person name="Hauser L."/>
            <person name="Kyrpides N."/>
            <person name="Mikhailova N."/>
            <person name="Fredrickson J."/>
            <person name="Richardson P."/>
        </authorList>
    </citation>
    <scope>NUCLEOTIDE SEQUENCE [LARGE SCALE GENOMIC DNA]</scope>
    <source>
        <strain>ATCC BAA-1098 / SB2B</strain>
    </source>
</reference>
<feature type="chain" id="PRO_0000297873" description="Flap endonuclease Xni">
    <location>
        <begin position="1"/>
        <end position="253"/>
    </location>
</feature>
<feature type="domain" description="5'-3' exonuclease" evidence="1">
    <location>
        <begin position="162"/>
        <end position="251"/>
    </location>
</feature>
<feature type="region of interest" description="Interaction with DNA" evidence="1">
    <location>
        <begin position="185"/>
        <end position="190"/>
    </location>
</feature>
<feature type="binding site" evidence="1">
    <location>
        <position position="105"/>
    </location>
    <ligand>
        <name>Mg(2+)</name>
        <dbReference type="ChEBI" id="CHEBI:18420"/>
    </ligand>
</feature>
<feature type="binding site" evidence="1">
    <location>
        <position position="172"/>
    </location>
    <ligand>
        <name>K(+)</name>
        <dbReference type="ChEBI" id="CHEBI:29103"/>
    </ligand>
</feature>
<feature type="binding site" evidence="1">
    <location>
        <position position="181"/>
    </location>
    <ligand>
        <name>K(+)</name>
        <dbReference type="ChEBI" id="CHEBI:29103"/>
    </ligand>
</feature>
<feature type="binding site" evidence="1">
    <location>
        <position position="183"/>
    </location>
    <ligand>
        <name>K(+)</name>
        <dbReference type="ChEBI" id="CHEBI:29103"/>
    </ligand>
</feature>
<feature type="binding site" evidence="1">
    <location>
        <position position="186"/>
    </location>
    <ligand>
        <name>K(+)</name>
        <dbReference type="ChEBI" id="CHEBI:29103"/>
    </ligand>
</feature>
<protein>
    <recommendedName>
        <fullName evidence="1">Flap endonuclease Xni</fullName>
        <shortName evidence="1">FEN</shortName>
        <ecNumber evidence="1">3.1.-.-</ecNumber>
    </recommendedName>
</protein>
<evidence type="ECO:0000255" key="1">
    <source>
        <dbReference type="HAMAP-Rule" id="MF_01192"/>
    </source>
</evidence>
<name>XNI_SHEAM</name>
<keyword id="KW-0238">DNA-binding</keyword>
<keyword id="KW-0255">Endonuclease</keyword>
<keyword id="KW-0378">Hydrolase</keyword>
<keyword id="KW-0460">Magnesium</keyword>
<keyword id="KW-0479">Metal-binding</keyword>
<keyword id="KW-0540">Nuclease</keyword>
<keyword id="KW-0630">Potassium</keyword>
<keyword id="KW-1185">Reference proteome</keyword>
<accession>A1S8B8</accession>
<sequence length="253" mass="28105">MNRLLIIDGLNLVRRIHAALPDEGDMDTLYDRVAQACRKLLRGHQPTHCAIVWDGDAISWRKHLYEDYKKGRKPMPEALAKGLPALKTKLETLDVHSVNADSEADDIIATLACKLAATGGEAIIVSTDKGLLQLMSPHIRQWDHFAGQFFDIEAFEAKLGIERHQLLDYIALCGDSGNKIPGIPGIGPKSASELLRTYRSLANLYHSLGTLGSRQANKLREGRDMARLSYKLAKLQTELPLHLKLSDLRVNPS</sequence>
<gene>
    <name evidence="1" type="primary">xni</name>
    <name evidence="1" type="synonym">ygdG</name>
    <name type="ordered locus">Sama_2420</name>
</gene>
<proteinExistence type="inferred from homology"/>
<comment type="function">
    <text evidence="1">Has flap endonuclease activity. During DNA replication, flap endonucleases cleave the 5'-overhanging flap structure that is generated by displacement synthesis when DNA polymerase encounters the 5'-end of a downstream Okazaki fragment.</text>
</comment>
<comment type="cofactor">
    <cofactor evidence="1">
        <name>Mg(2+)</name>
        <dbReference type="ChEBI" id="CHEBI:18420"/>
    </cofactor>
    <text evidence="1">Binds 2 Mg(2+) per subunit. Only one magnesium ion has a direct interaction with the protein, the other interactions are indirect.</text>
</comment>
<comment type="cofactor">
    <cofactor evidence="1">
        <name>K(+)</name>
        <dbReference type="ChEBI" id="CHEBI:29103"/>
    </cofactor>
    <text evidence="1">Binds 1 K(+) per subunit. The potassium ion strongly increases the affinity for DNA.</text>
</comment>
<comment type="similarity">
    <text evidence="1">Belongs to the Xni family.</text>
</comment>
<organism>
    <name type="scientific">Shewanella amazonensis (strain ATCC BAA-1098 / SB2B)</name>
    <dbReference type="NCBI Taxonomy" id="326297"/>
    <lineage>
        <taxon>Bacteria</taxon>
        <taxon>Pseudomonadati</taxon>
        <taxon>Pseudomonadota</taxon>
        <taxon>Gammaproteobacteria</taxon>
        <taxon>Alteromonadales</taxon>
        <taxon>Shewanellaceae</taxon>
        <taxon>Shewanella</taxon>
    </lineage>
</organism>